<name>RAD59_CANGA</name>
<gene>
    <name type="primary">RAD59</name>
    <name type="ordered locus">CAGL0D00902g</name>
</gene>
<dbReference type="EMBL" id="CR380950">
    <property type="protein sequence ID" value="CAG58364.1"/>
    <property type="molecule type" value="Genomic_DNA"/>
</dbReference>
<dbReference type="RefSeq" id="XP_445453.1">
    <property type="nucleotide sequence ID" value="XM_445453.1"/>
</dbReference>
<dbReference type="SMR" id="Q6FWE1"/>
<dbReference type="FunCoup" id="Q6FWE1">
    <property type="interactions" value="137"/>
</dbReference>
<dbReference type="STRING" id="284593.Q6FWE1"/>
<dbReference type="EnsemblFungi" id="CAGL0D00902g-T">
    <property type="protein sequence ID" value="CAGL0D00902g-T-p1"/>
    <property type="gene ID" value="CAGL0D00902g"/>
</dbReference>
<dbReference type="KEGG" id="cgr:2887211"/>
<dbReference type="CGD" id="CAL0128311">
    <property type="gene designation" value="CAGL0D00902g"/>
</dbReference>
<dbReference type="VEuPathDB" id="FungiDB:CAGL0D00902g"/>
<dbReference type="eggNOG" id="KOG4141">
    <property type="taxonomic scope" value="Eukaryota"/>
</dbReference>
<dbReference type="HOGENOM" id="CLU_091426_0_0_1"/>
<dbReference type="InParanoid" id="Q6FWE1"/>
<dbReference type="OMA" id="WSVQRIG"/>
<dbReference type="Proteomes" id="UP000002428">
    <property type="component" value="Chromosome D"/>
</dbReference>
<dbReference type="GO" id="GO:0005759">
    <property type="term" value="C:mitochondrial matrix"/>
    <property type="evidence" value="ECO:0007669"/>
    <property type="project" value="EnsemblFungi"/>
</dbReference>
<dbReference type="GO" id="GO:0005634">
    <property type="term" value="C:nucleus"/>
    <property type="evidence" value="ECO:0007669"/>
    <property type="project" value="UniProtKB-SubCell"/>
</dbReference>
<dbReference type="GO" id="GO:0006277">
    <property type="term" value="P:DNA amplification"/>
    <property type="evidence" value="ECO:0007669"/>
    <property type="project" value="EnsemblFungi"/>
</dbReference>
<dbReference type="GO" id="GO:0000724">
    <property type="term" value="P:double-strand break repair via homologous recombination"/>
    <property type="evidence" value="ECO:0007669"/>
    <property type="project" value="TreeGrafter"/>
</dbReference>
<dbReference type="GO" id="GO:0045002">
    <property type="term" value="P:double-strand break repair via single-strand annealing"/>
    <property type="evidence" value="ECO:0007669"/>
    <property type="project" value="EnsemblFungi"/>
</dbReference>
<dbReference type="GO" id="GO:0043504">
    <property type="term" value="P:mitochondrial DNA repair"/>
    <property type="evidence" value="ECO:0007669"/>
    <property type="project" value="EnsemblFungi"/>
</dbReference>
<dbReference type="GO" id="GO:2000278">
    <property type="term" value="P:regulation of DNA biosynthetic process"/>
    <property type="evidence" value="ECO:0007669"/>
    <property type="project" value="EnsemblFungi"/>
</dbReference>
<dbReference type="GO" id="GO:0000722">
    <property type="term" value="P:telomere maintenance via recombination"/>
    <property type="evidence" value="ECO:0007669"/>
    <property type="project" value="EnsemblFungi"/>
</dbReference>
<dbReference type="Gene3D" id="3.30.390.80">
    <property type="entry name" value="DNA repair protein Rad52/59/22"/>
    <property type="match status" value="1"/>
</dbReference>
<dbReference type="InterPro" id="IPR041247">
    <property type="entry name" value="Rad52_fam"/>
</dbReference>
<dbReference type="InterPro" id="IPR007232">
    <property type="entry name" value="Rad52_Rad59_Rad22"/>
</dbReference>
<dbReference type="InterPro" id="IPR042525">
    <property type="entry name" value="Rad52_Rad59_Rad22_sf"/>
</dbReference>
<dbReference type="InterPro" id="IPR016810">
    <property type="entry name" value="Rad59"/>
</dbReference>
<dbReference type="PANTHER" id="PTHR12132">
    <property type="entry name" value="DNA REPAIR AND RECOMBINATION PROTEIN RAD52, RAD59"/>
    <property type="match status" value="1"/>
</dbReference>
<dbReference type="PANTHER" id="PTHR12132:SF2">
    <property type="entry name" value="DNA REPAIR PROTEIN RAD59"/>
    <property type="match status" value="1"/>
</dbReference>
<dbReference type="Pfam" id="PF04098">
    <property type="entry name" value="Rad52_Rad22"/>
    <property type="match status" value="1"/>
</dbReference>
<dbReference type="PIRSF" id="PIRSF022936">
    <property type="entry name" value="RAD59_fungi"/>
    <property type="match status" value="1"/>
</dbReference>
<dbReference type="SUPFAM" id="SSF54768">
    <property type="entry name" value="dsRNA-binding domain-like"/>
    <property type="match status" value="1"/>
</dbReference>
<proteinExistence type="inferred from homology"/>
<evidence type="ECO:0000250" key="1"/>
<evidence type="ECO:0000305" key="2"/>
<comment type="function">
    <text evidence="1">Involved in the repair of double-strand breaks in DNA during vegetative growth via recombination and single-strand annealing. Anneals complementary single-stranded DNA (By similarity).</text>
</comment>
<comment type="subunit">
    <text evidence="1">Interacts with RAD51 and RAD52.</text>
</comment>
<comment type="subcellular location">
    <subcellularLocation>
        <location evidence="1">Nucleus</location>
    </subcellularLocation>
</comment>
<comment type="similarity">
    <text evidence="2">Belongs to the RAD52 family.</text>
</comment>
<organism>
    <name type="scientific">Candida glabrata (strain ATCC 2001 / BCRC 20586 / JCM 3761 / NBRC 0622 / NRRL Y-65 / CBS 138)</name>
    <name type="common">Yeast</name>
    <name type="synonym">Nakaseomyces glabratus</name>
    <dbReference type="NCBI Taxonomy" id="284593"/>
    <lineage>
        <taxon>Eukaryota</taxon>
        <taxon>Fungi</taxon>
        <taxon>Dikarya</taxon>
        <taxon>Ascomycota</taxon>
        <taxon>Saccharomycotina</taxon>
        <taxon>Saccharomycetes</taxon>
        <taxon>Saccharomycetales</taxon>
        <taxon>Saccharomycetaceae</taxon>
        <taxon>Nakaseomyces</taxon>
    </lineage>
</organism>
<feature type="chain" id="PRO_0000173895" description="DNA repair protein RAD59">
    <location>
        <begin position="1"/>
        <end position="212"/>
    </location>
</feature>
<reference key="1">
    <citation type="journal article" date="2004" name="Nature">
        <title>Genome evolution in yeasts.</title>
        <authorList>
            <person name="Dujon B."/>
            <person name="Sherman D."/>
            <person name="Fischer G."/>
            <person name="Durrens P."/>
            <person name="Casaregola S."/>
            <person name="Lafontaine I."/>
            <person name="de Montigny J."/>
            <person name="Marck C."/>
            <person name="Neuveglise C."/>
            <person name="Talla E."/>
            <person name="Goffard N."/>
            <person name="Frangeul L."/>
            <person name="Aigle M."/>
            <person name="Anthouard V."/>
            <person name="Babour A."/>
            <person name="Barbe V."/>
            <person name="Barnay S."/>
            <person name="Blanchin S."/>
            <person name="Beckerich J.-M."/>
            <person name="Beyne E."/>
            <person name="Bleykasten C."/>
            <person name="Boisrame A."/>
            <person name="Boyer J."/>
            <person name="Cattolico L."/>
            <person name="Confanioleri F."/>
            <person name="de Daruvar A."/>
            <person name="Despons L."/>
            <person name="Fabre E."/>
            <person name="Fairhead C."/>
            <person name="Ferry-Dumazet H."/>
            <person name="Groppi A."/>
            <person name="Hantraye F."/>
            <person name="Hennequin C."/>
            <person name="Jauniaux N."/>
            <person name="Joyet P."/>
            <person name="Kachouri R."/>
            <person name="Kerrest A."/>
            <person name="Koszul R."/>
            <person name="Lemaire M."/>
            <person name="Lesur I."/>
            <person name="Ma L."/>
            <person name="Muller H."/>
            <person name="Nicaud J.-M."/>
            <person name="Nikolski M."/>
            <person name="Oztas S."/>
            <person name="Ozier-Kalogeropoulos O."/>
            <person name="Pellenz S."/>
            <person name="Potier S."/>
            <person name="Richard G.-F."/>
            <person name="Straub M.-L."/>
            <person name="Suleau A."/>
            <person name="Swennen D."/>
            <person name="Tekaia F."/>
            <person name="Wesolowski-Louvel M."/>
            <person name="Westhof E."/>
            <person name="Wirth B."/>
            <person name="Zeniou-Meyer M."/>
            <person name="Zivanovic Y."/>
            <person name="Bolotin-Fukuhara M."/>
            <person name="Thierry A."/>
            <person name="Bouchier C."/>
            <person name="Caudron B."/>
            <person name="Scarpelli C."/>
            <person name="Gaillardin C."/>
            <person name="Weissenbach J."/>
            <person name="Wincker P."/>
            <person name="Souciet J.-L."/>
        </authorList>
    </citation>
    <scope>NUCLEOTIDE SEQUENCE [LARGE SCALE GENOMIC DNA]</scope>
    <source>
        <strain>ATCC 2001 / BCRC 20586 / JCM 3761 / NBRC 0622 / NRRL Y-65 / CBS 138</strain>
    </source>
</reference>
<keyword id="KW-0227">DNA damage</keyword>
<keyword id="KW-0233">DNA recombination</keyword>
<keyword id="KW-0234">DNA repair</keyword>
<keyword id="KW-0539">Nucleus</keyword>
<keyword id="KW-1185">Reference proteome</keyword>
<sequence>MDGKVTYEGAVYSSGPGVEVGDIVFVEDWDGRPASEWSVQRIGVLQSKIERYTYQIYHSNRYGKHNLSKLIPRHVLVGFANEVFGFDGWKTDIEFVETKDGFPGSTSSISIADKISADSGGGTGALADRYTVIAEASVKVTLKDGTNTRMTGFSRATTPSKIESFNKAKKEAVNDALKKALLSFEKIILEHELKTKNDFYVDGLYGSKAQKI</sequence>
<protein>
    <recommendedName>
        <fullName>DNA repair protein RAD59</fullName>
    </recommendedName>
</protein>
<accession>Q6FWE1</accession>